<dbReference type="EMBL" id="BC045320">
    <property type="protein sequence ID" value="AAH45320.1"/>
    <property type="molecule type" value="mRNA"/>
</dbReference>
<dbReference type="RefSeq" id="NP_998682.1">
    <property type="nucleotide sequence ID" value="NM_213517.1"/>
</dbReference>
<dbReference type="SMR" id="Q7ZW25"/>
<dbReference type="FunCoup" id="Q7ZW25">
    <property type="interactions" value="2822"/>
</dbReference>
<dbReference type="STRING" id="7955.ENSDARP00000070582"/>
<dbReference type="PaxDb" id="7955-ENSDARP00000070582"/>
<dbReference type="GeneID" id="798901"/>
<dbReference type="KEGG" id="dre:798901"/>
<dbReference type="AGR" id="ZFIN:ZDB-GENE-040426-2922"/>
<dbReference type="CTD" id="27243"/>
<dbReference type="ZFIN" id="ZDB-GENE-040426-2922">
    <property type="gene designation" value="chmp2a"/>
</dbReference>
<dbReference type="eggNOG" id="KOG3230">
    <property type="taxonomic scope" value="Eukaryota"/>
</dbReference>
<dbReference type="InParanoid" id="Q7ZW25"/>
<dbReference type="OrthoDB" id="10252926at2759"/>
<dbReference type="PhylomeDB" id="Q7ZW25"/>
<dbReference type="Reactome" id="R-DRE-1632852">
    <property type="pathway name" value="Macroautophagy"/>
</dbReference>
<dbReference type="Reactome" id="R-DRE-917729">
    <property type="pathway name" value="Endosomal Sorting Complex Required For Transport (ESCRT)"/>
</dbReference>
<dbReference type="Reactome" id="R-DRE-9668328">
    <property type="pathway name" value="Sealing of the nuclear envelope (NE) by ESCRT-III"/>
</dbReference>
<dbReference type="PRO" id="PR:Q7ZW25"/>
<dbReference type="Proteomes" id="UP000000437">
    <property type="component" value="Chromosome 12"/>
</dbReference>
<dbReference type="GO" id="GO:0000815">
    <property type="term" value="C:ESCRT III complex"/>
    <property type="evidence" value="ECO:0000318"/>
    <property type="project" value="GO_Central"/>
</dbReference>
<dbReference type="GO" id="GO:0031902">
    <property type="term" value="C:late endosome membrane"/>
    <property type="evidence" value="ECO:0007669"/>
    <property type="project" value="UniProtKB-SubCell"/>
</dbReference>
<dbReference type="GO" id="GO:0005771">
    <property type="term" value="C:multivesicular body"/>
    <property type="evidence" value="ECO:0000318"/>
    <property type="project" value="GO_Central"/>
</dbReference>
<dbReference type="GO" id="GO:0005635">
    <property type="term" value="C:nuclear envelope"/>
    <property type="evidence" value="ECO:0000250"/>
    <property type="project" value="UniProtKB"/>
</dbReference>
<dbReference type="GO" id="GO:0032509">
    <property type="term" value="P:endosome transport via multivesicular body sorting pathway"/>
    <property type="evidence" value="ECO:0000318"/>
    <property type="project" value="GO_Central"/>
</dbReference>
<dbReference type="GO" id="GO:0010458">
    <property type="term" value="P:exit from mitosis"/>
    <property type="evidence" value="ECO:0000250"/>
    <property type="project" value="UniProtKB"/>
</dbReference>
<dbReference type="GO" id="GO:0045324">
    <property type="term" value="P:late endosome to vacuole transport"/>
    <property type="evidence" value="ECO:0000318"/>
    <property type="project" value="GO_Central"/>
</dbReference>
<dbReference type="GO" id="GO:0031468">
    <property type="term" value="P:nuclear membrane reassembly"/>
    <property type="evidence" value="ECO:0000250"/>
    <property type="project" value="UniProtKB"/>
</dbReference>
<dbReference type="GO" id="GO:0015031">
    <property type="term" value="P:protein transport"/>
    <property type="evidence" value="ECO:0000318"/>
    <property type="project" value="GO_Central"/>
</dbReference>
<dbReference type="Gene3D" id="6.10.140.1230">
    <property type="match status" value="1"/>
</dbReference>
<dbReference type="InterPro" id="IPR005024">
    <property type="entry name" value="Snf7_fam"/>
</dbReference>
<dbReference type="PANTHER" id="PTHR10476">
    <property type="entry name" value="CHARGED MULTIVESICULAR BODY PROTEIN"/>
    <property type="match status" value="1"/>
</dbReference>
<dbReference type="Pfam" id="PF03357">
    <property type="entry name" value="Snf7"/>
    <property type="match status" value="1"/>
</dbReference>
<sequence length="220" mass="25108">MESLFGRRKTPEEMLRQNQRALNRAMRDLDRERQRLEQQEKKIIADIKKMAKQGQMDAVKIMAKDLVRTRRYVKKFIMMRANIQAVSLKIQTLKSNNSMAQAMKGVTKAMATMNRQLKLPQIQKIMMEFERQSEIMDMKEEMMNDAIDDAMGDEDDEEESDAVVSQVLDELGLTLSDELSNLPATGGSLSVAAGKKAEPQPTLADADADLEERLNNLRRD</sequence>
<reference key="1">
    <citation type="submission" date="2003-01" db="EMBL/GenBank/DDBJ databases">
        <authorList>
            <consortium name="NIH - Zebrafish Gene Collection (ZGC) project"/>
        </authorList>
    </citation>
    <scope>NUCLEOTIDE SEQUENCE [LARGE SCALE MRNA]</scope>
    <source>
        <strain>AB</strain>
    </source>
</reference>
<protein>
    <recommendedName>
        <fullName>Charged multivesicular body protein 2a</fullName>
    </recommendedName>
    <alternativeName>
        <fullName>Chromatin-modifying protein 2a</fullName>
        <shortName>CHMP2a</shortName>
    </alternativeName>
</protein>
<keyword id="KW-0175">Coiled coil</keyword>
<keyword id="KW-0963">Cytoplasm</keyword>
<keyword id="KW-0967">Endosome</keyword>
<keyword id="KW-0472">Membrane</keyword>
<keyword id="KW-0653">Protein transport</keyword>
<keyword id="KW-1185">Reference proteome</keyword>
<keyword id="KW-0813">Transport</keyword>
<accession>Q7ZW25</accession>
<comment type="function">
    <text evidence="1">Probable core component of the endosomal sorting required for transport complex III (ESCRT-III) which is involved in multivesicular bodies (MVBs) formation and sorting of endosomal cargo proteins into MVBs. MVBs contain intraluminal vesicles (ILVs) that are generated by invagination and scission from the limiting membrane of the endosome and mostly are delivered to lysosomes enabling degradation of membrane proteins, such as stimulated growth factor receptors, lysosomal enzymes and lipids (By similarity).</text>
</comment>
<comment type="subunit">
    <text evidence="1">Probable core component of the endosomal sorting required for transport complex III (ESCRT-III). ESCRT-III components are thought to multimerize to form a flat lattice on the perimeter membrane of the endosome (By similarity).</text>
</comment>
<comment type="subcellular location">
    <subcellularLocation>
        <location evidence="1">Late endosome membrane</location>
        <topology evidence="1">Peripheral membrane protein</topology>
        <orientation evidence="1">Cytoplasmic side</orientation>
    </subcellularLocation>
    <subcellularLocation>
        <location evidence="1">Cytoplasm</location>
    </subcellularLocation>
</comment>
<comment type="similarity">
    <text evidence="4">Belongs to the SNF7 family.</text>
</comment>
<name>CHM2A_DANRE</name>
<gene>
    <name type="primary">chmp2a</name>
    <name type="synonym">bc2</name>
</gene>
<feature type="chain" id="PRO_0000211465" description="Charged multivesicular body protein 2a">
    <location>
        <begin position="1"/>
        <end position="220"/>
    </location>
</feature>
<feature type="region of interest" description="Disordered" evidence="3">
    <location>
        <begin position="184"/>
        <end position="220"/>
    </location>
</feature>
<feature type="coiled-coil region" evidence="2">
    <location>
        <begin position="12"/>
        <end position="53"/>
    </location>
</feature>
<feature type="short sequence motif" description="MIT-interacting motif">
    <location>
        <begin position="208"/>
        <end position="218"/>
    </location>
</feature>
<feature type="compositionally biased region" description="Basic and acidic residues" evidence="3">
    <location>
        <begin position="211"/>
        <end position="220"/>
    </location>
</feature>
<organism>
    <name type="scientific">Danio rerio</name>
    <name type="common">Zebrafish</name>
    <name type="synonym">Brachydanio rerio</name>
    <dbReference type="NCBI Taxonomy" id="7955"/>
    <lineage>
        <taxon>Eukaryota</taxon>
        <taxon>Metazoa</taxon>
        <taxon>Chordata</taxon>
        <taxon>Craniata</taxon>
        <taxon>Vertebrata</taxon>
        <taxon>Euteleostomi</taxon>
        <taxon>Actinopterygii</taxon>
        <taxon>Neopterygii</taxon>
        <taxon>Teleostei</taxon>
        <taxon>Ostariophysi</taxon>
        <taxon>Cypriniformes</taxon>
        <taxon>Danionidae</taxon>
        <taxon>Danioninae</taxon>
        <taxon>Danio</taxon>
    </lineage>
</organism>
<proteinExistence type="evidence at transcript level"/>
<evidence type="ECO:0000250" key="1"/>
<evidence type="ECO:0000255" key="2"/>
<evidence type="ECO:0000256" key="3">
    <source>
        <dbReference type="SAM" id="MobiDB-lite"/>
    </source>
</evidence>
<evidence type="ECO:0000305" key="4"/>